<comment type="function">
    <text evidence="1">Molecular chaperone. Has ATPase activity.</text>
</comment>
<comment type="subunit">
    <text evidence="1">Homodimer.</text>
</comment>
<comment type="subcellular location">
    <subcellularLocation>
        <location evidence="1">Cytoplasm</location>
    </subcellularLocation>
</comment>
<comment type="similarity">
    <text evidence="1">Belongs to the heat shock protein 90 family.</text>
</comment>
<name>HTPG_STRCO</name>
<sequence length="638" mass="71628">MTTETFEFQVEARQLLQLMIHSVYSNKDVFLRELVSNASDALDKLRLAALRDDAPDADVSDLHIELEVDKDARTLTVRDNGIGMSYDEVTRLIGTIANSGTAKFLEELREAKDAAGADGLIGQFGVGFYSGFMVADEVTLVTRHAGETEGTRWTSRGEGTYTLERIGEAPQGTAVTLHLKPADVENQLHDYTSAWKIKEIVKRYSDFITWPVRLLPEPGGDGSDGEGAEAREAETLNSMKALWARPRDEVSDDEYHELYKHIAHDWRDPLETIRLQAEGTFEYQALLFVPSHAPHDLFTQGYQRGVQLYVKRVFIMDDCEELLPPHLRFVKGVVDAQDLSLNVSREILQQDRHIRMIQRRLTKKVLSTVKDLRTSAPDRYATFWREFGAVLKEGLVTDSDNRDAILAACSFASTHDAEEPTALKDYVERMKEGQDDIYYMTGESRQAIENSPHMEAFRAKGVEVLLLTDAVDEVWVDAVGEYEGKTLRSVAKGEIDLSGTEADKSDAEKEKQGEEYAGLLGWMTEHLGEEVKEVRLSSRLTVSPACVVSDAGELTPALENMYRAMGQEVPGAKRILELNPEHQLVKSLNRAWTDRQDRAELTETAELLHALAVLAEGGRPKEPARFVQLMADRLERTL</sequence>
<proteinExistence type="inferred from homology"/>
<organism>
    <name type="scientific">Streptomyces coelicolor (strain ATCC BAA-471 / A3(2) / M145)</name>
    <dbReference type="NCBI Taxonomy" id="100226"/>
    <lineage>
        <taxon>Bacteria</taxon>
        <taxon>Bacillati</taxon>
        <taxon>Actinomycetota</taxon>
        <taxon>Actinomycetes</taxon>
        <taxon>Kitasatosporales</taxon>
        <taxon>Streptomycetaceae</taxon>
        <taxon>Streptomyces</taxon>
        <taxon>Streptomyces albidoflavus group</taxon>
    </lineage>
</organism>
<evidence type="ECO:0000255" key="1">
    <source>
        <dbReference type="HAMAP-Rule" id="MF_00505"/>
    </source>
</evidence>
<keyword id="KW-0067">ATP-binding</keyword>
<keyword id="KW-0143">Chaperone</keyword>
<keyword id="KW-0963">Cytoplasm</keyword>
<keyword id="KW-0547">Nucleotide-binding</keyword>
<keyword id="KW-1185">Reference proteome</keyword>
<keyword id="KW-0346">Stress response</keyword>
<gene>
    <name evidence="1" type="primary">htpG</name>
    <name type="ordered locus">SCO7516</name>
    <name type="ORF">SCBAC25F8.08</name>
</gene>
<accession>P58481</accession>
<dbReference type="EMBL" id="AL939131">
    <property type="protein sequence ID" value="CAC42143.1"/>
    <property type="molecule type" value="Genomic_DNA"/>
</dbReference>
<dbReference type="RefSeq" id="NP_631561.1">
    <property type="nucleotide sequence ID" value="NC_003888.3"/>
</dbReference>
<dbReference type="RefSeq" id="WP_003971629.1">
    <property type="nucleotide sequence ID" value="NZ_VNID01000005.1"/>
</dbReference>
<dbReference type="SMR" id="P58481"/>
<dbReference type="FunCoup" id="P58481">
    <property type="interactions" value="291"/>
</dbReference>
<dbReference type="STRING" id="100226.gene:17765176"/>
<dbReference type="PaxDb" id="100226-SCO7516"/>
<dbReference type="GeneID" id="91388906"/>
<dbReference type="KEGG" id="sco:SCO7516"/>
<dbReference type="PATRIC" id="fig|100226.15.peg.7629"/>
<dbReference type="eggNOG" id="COG0326">
    <property type="taxonomic scope" value="Bacteria"/>
</dbReference>
<dbReference type="HOGENOM" id="CLU_006684_3_0_11"/>
<dbReference type="InParanoid" id="P58481"/>
<dbReference type="OrthoDB" id="9802640at2"/>
<dbReference type="PhylomeDB" id="P58481"/>
<dbReference type="Proteomes" id="UP000001973">
    <property type="component" value="Chromosome"/>
</dbReference>
<dbReference type="GO" id="GO:0005829">
    <property type="term" value="C:cytosol"/>
    <property type="evidence" value="ECO:0000318"/>
    <property type="project" value="GO_Central"/>
</dbReference>
<dbReference type="GO" id="GO:0005524">
    <property type="term" value="F:ATP binding"/>
    <property type="evidence" value="ECO:0000318"/>
    <property type="project" value="GO_Central"/>
</dbReference>
<dbReference type="GO" id="GO:0016887">
    <property type="term" value="F:ATP hydrolysis activity"/>
    <property type="evidence" value="ECO:0000318"/>
    <property type="project" value="GO_Central"/>
</dbReference>
<dbReference type="GO" id="GO:0140662">
    <property type="term" value="F:ATP-dependent protein folding chaperone"/>
    <property type="evidence" value="ECO:0007669"/>
    <property type="project" value="InterPro"/>
</dbReference>
<dbReference type="GO" id="GO:0051082">
    <property type="term" value="F:unfolded protein binding"/>
    <property type="evidence" value="ECO:0000318"/>
    <property type="project" value="GO_Central"/>
</dbReference>
<dbReference type="GO" id="GO:0006974">
    <property type="term" value="P:DNA damage response"/>
    <property type="evidence" value="ECO:0000318"/>
    <property type="project" value="GO_Central"/>
</dbReference>
<dbReference type="GO" id="GO:0006457">
    <property type="term" value="P:protein folding"/>
    <property type="evidence" value="ECO:0000318"/>
    <property type="project" value="GO_Central"/>
</dbReference>
<dbReference type="GO" id="GO:0009408">
    <property type="term" value="P:response to heat"/>
    <property type="evidence" value="ECO:0000318"/>
    <property type="project" value="GO_Central"/>
</dbReference>
<dbReference type="CDD" id="cd16927">
    <property type="entry name" value="HATPase_Hsp90-like"/>
    <property type="match status" value="1"/>
</dbReference>
<dbReference type="FunFam" id="1.20.120.790:FF:000006">
    <property type="entry name" value="Chaperone protein HtpG"/>
    <property type="match status" value="1"/>
</dbReference>
<dbReference type="FunFam" id="3.40.50.11260:FF:000005">
    <property type="entry name" value="Heat shock protein 90"/>
    <property type="match status" value="1"/>
</dbReference>
<dbReference type="FunFam" id="3.30.230.80:FF:000002">
    <property type="entry name" value="Molecular chaperone HtpG"/>
    <property type="match status" value="1"/>
</dbReference>
<dbReference type="FunFam" id="3.30.565.10:FF:000009">
    <property type="entry name" value="Molecular chaperone HtpG"/>
    <property type="match status" value="1"/>
</dbReference>
<dbReference type="Gene3D" id="3.30.230.80">
    <property type="match status" value="1"/>
</dbReference>
<dbReference type="Gene3D" id="3.40.50.11260">
    <property type="match status" value="1"/>
</dbReference>
<dbReference type="Gene3D" id="1.20.120.790">
    <property type="entry name" value="Heat shock protein 90, C-terminal domain"/>
    <property type="match status" value="1"/>
</dbReference>
<dbReference type="Gene3D" id="3.30.565.10">
    <property type="entry name" value="Histidine kinase-like ATPase, C-terminal domain"/>
    <property type="match status" value="1"/>
</dbReference>
<dbReference type="HAMAP" id="MF_00505">
    <property type="entry name" value="HSP90"/>
    <property type="match status" value="1"/>
</dbReference>
<dbReference type="InterPro" id="IPR036890">
    <property type="entry name" value="HATPase_C_sf"/>
</dbReference>
<dbReference type="InterPro" id="IPR019805">
    <property type="entry name" value="Heat_shock_protein_90_CS"/>
</dbReference>
<dbReference type="InterPro" id="IPR037196">
    <property type="entry name" value="HSP90_C"/>
</dbReference>
<dbReference type="InterPro" id="IPR001404">
    <property type="entry name" value="Hsp90_fam"/>
</dbReference>
<dbReference type="InterPro" id="IPR020575">
    <property type="entry name" value="Hsp90_N"/>
</dbReference>
<dbReference type="InterPro" id="IPR020568">
    <property type="entry name" value="Ribosomal_Su5_D2-typ_SF"/>
</dbReference>
<dbReference type="NCBIfam" id="NF003555">
    <property type="entry name" value="PRK05218.1"/>
    <property type="match status" value="1"/>
</dbReference>
<dbReference type="PANTHER" id="PTHR11528">
    <property type="entry name" value="HEAT SHOCK PROTEIN 90 FAMILY MEMBER"/>
    <property type="match status" value="1"/>
</dbReference>
<dbReference type="Pfam" id="PF13589">
    <property type="entry name" value="HATPase_c_3"/>
    <property type="match status" value="1"/>
</dbReference>
<dbReference type="Pfam" id="PF00183">
    <property type="entry name" value="HSP90"/>
    <property type="match status" value="1"/>
</dbReference>
<dbReference type="PIRSF" id="PIRSF002583">
    <property type="entry name" value="Hsp90"/>
    <property type="match status" value="1"/>
</dbReference>
<dbReference type="PRINTS" id="PR00775">
    <property type="entry name" value="HEATSHOCK90"/>
</dbReference>
<dbReference type="SMART" id="SM00387">
    <property type="entry name" value="HATPase_c"/>
    <property type="match status" value="1"/>
</dbReference>
<dbReference type="SUPFAM" id="SSF55874">
    <property type="entry name" value="ATPase domain of HSP90 chaperone/DNA topoisomerase II/histidine kinase"/>
    <property type="match status" value="1"/>
</dbReference>
<dbReference type="SUPFAM" id="SSF110942">
    <property type="entry name" value="HSP90 C-terminal domain"/>
    <property type="match status" value="1"/>
</dbReference>
<dbReference type="SUPFAM" id="SSF54211">
    <property type="entry name" value="Ribosomal protein S5 domain 2-like"/>
    <property type="match status" value="1"/>
</dbReference>
<dbReference type="PROSITE" id="PS00298">
    <property type="entry name" value="HSP90"/>
    <property type="match status" value="1"/>
</dbReference>
<reference key="1">
    <citation type="journal article" date="2002" name="Nature">
        <title>Complete genome sequence of the model actinomycete Streptomyces coelicolor A3(2).</title>
        <authorList>
            <person name="Bentley S.D."/>
            <person name="Chater K.F."/>
            <person name="Cerdeno-Tarraga A.-M."/>
            <person name="Challis G.L."/>
            <person name="Thomson N.R."/>
            <person name="James K.D."/>
            <person name="Harris D.E."/>
            <person name="Quail M.A."/>
            <person name="Kieser H."/>
            <person name="Harper D."/>
            <person name="Bateman A."/>
            <person name="Brown S."/>
            <person name="Chandra G."/>
            <person name="Chen C.W."/>
            <person name="Collins M."/>
            <person name="Cronin A."/>
            <person name="Fraser A."/>
            <person name="Goble A."/>
            <person name="Hidalgo J."/>
            <person name="Hornsby T."/>
            <person name="Howarth S."/>
            <person name="Huang C.-H."/>
            <person name="Kieser T."/>
            <person name="Larke L."/>
            <person name="Murphy L.D."/>
            <person name="Oliver K."/>
            <person name="O'Neil S."/>
            <person name="Rabbinowitsch E."/>
            <person name="Rajandream M.A."/>
            <person name="Rutherford K.M."/>
            <person name="Rutter S."/>
            <person name="Seeger K."/>
            <person name="Saunders D."/>
            <person name="Sharp S."/>
            <person name="Squares R."/>
            <person name="Squares S."/>
            <person name="Taylor K."/>
            <person name="Warren T."/>
            <person name="Wietzorrek A."/>
            <person name="Woodward J.R."/>
            <person name="Barrell B.G."/>
            <person name="Parkhill J."/>
            <person name="Hopwood D.A."/>
        </authorList>
    </citation>
    <scope>NUCLEOTIDE SEQUENCE [LARGE SCALE GENOMIC DNA]</scope>
    <source>
        <strain>ATCC BAA-471 / A3(2) / M145</strain>
    </source>
</reference>
<feature type="chain" id="PRO_0000063016" description="Chaperone protein HtpG">
    <location>
        <begin position="1"/>
        <end position="638"/>
    </location>
</feature>
<feature type="region of interest" description="A; substrate-binding" evidence="1">
    <location>
        <begin position="1"/>
        <end position="345"/>
    </location>
</feature>
<feature type="region of interest" description="B" evidence="1">
    <location>
        <begin position="346"/>
        <end position="560"/>
    </location>
</feature>
<feature type="region of interest" description="C" evidence="1">
    <location>
        <begin position="561"/>
        <end position="638"/>
    </location>
</feature>
<protein>
    <recommendedName>
        <fullName evidence="1">Chaperone protein HtpG</fullName>
    </recommendedName>
    <alternativeName>
        <fullName evidence="1">Heat shock protein HtpG</fullName>
    </alternativeName>
    <alternativeName>
        <fullName evidence="1">High temperature protein G</fullName>
    </alternativeName>
</protein>